<name>MDH2_AQUAE</name>
<organism>
    <name type="scientific">Aquifex aeolicus (strain VF5)</name>
    <dbReference type="NCBI Taxonomy" id="224324"/>
    <lineage>
        <taxon>Bacteria</taxon>
        <taxon>Pseudomonadati</taxon>
        <taxon>Aquificota</taxon>
        <taxon>Aquificia</taxon>
        <taxon>Aquificales</taxon>
        <taxon>Aquificaceae</taxon>
        <taxon>Aquifex</taxon>
    </lineage>
</organism>
<sequence>MKGKLINSFLMKKPKISVIGAGKVGENVAYLLTILGLGDVYLFARYKKGLEPAKAKALDLKQMAVLMDIDINVKGISYDKEGFEELKGSDIVVITAGIPRREGMSREDLLYENLKILKKFTDAIKEYAKDSIIIVVSNPVDTLTYATIKLTGFEPRRVIGMAGVLDSARFKNFVKEKIGISNADIRTLVLGTHGDLMVPVTSHSFIGDKPIEEVFSASEIDELIEKTRKGGAQIVSLMGTSAYYAPAASVVIMVESIINDRKRVMPCSVYVEGEAAKHYEIEGVCIGLPVVLGKKGVEDFELVNLSGYEKRELLRSAKTLKEMVSLADKLLNEL</sequence>
<protein>
    <recommendedName>
        <fullName evidence="1">Malate dehydrogenase 2</fullName>
        <ecNumber evidence="1">1.1.1.37</ecNumber>
    </recommendedName>
</protein>
<dbReference type="EC" id="1.1.1.37" evidence="1"/>
<dbReference type="EMBL" id="AE000657">
    <property type="protein sequence ID" value="AAC07547.1"/>
    <property type="molecule type" value="Genomic_DNA"/>
</dbReference>
<dbReference type="PIR" id="D70444">
    <property type="entry name" value="D70444"/>
</dbReference>
<dbReference type="RefSeq" id="NP_214147.1">
    <property type="nucleotide sequence ID" value="NC_000918.1"/>
</dbReference>
<dbReference type="SMR" id="O67581"/>
<dbReference type="FunCoup" id="O67581">
    <property type="interactions" value="415"/>
</dbReference>
<dbReference type="STRING" id="224324.aq_1665"/>
<dbReference type="EnsemblBacteria" id="AAC07547">
    <property type="protein sequence ID" value="AAC07547"/>
    <property type="gene ID" value="aq_1665"/>
</dbReference>
<dbReference type="KEGG" id="aae:aq_1665"/>
<dbReference type="PATRIC" id="fig|224324.8.peg.1288"/>
<dbReference type="eggNOG" id="COG0039">
    <property type="taxonomic scope" value="Bacteria"/>
</dbReference>
<dbReference type="HOGENOM" id="CLU_045401_2_1_0"/>
<dbReference type="InParanoid" id="O67581"/>
<dbReference type="OrthoDB" id="9802969at2"/>
<dbReference type="Proteomes" id="UP000000798">
    <property type="component" value="Chromosome"/>
</dbReference>
<dbReference type="GO" id="GO:0005737">
    <property type="term" value="C:cytoplasm"/>
    <property type="evidence" value="ECO:0000318"/>
    <property type="project" value="GO_Central"/>
</dbReference>
<dbReference type="GO" id="GO:0030060">
    <property type="term" value="F:L-malate dehydrogenase (NAD+) activity"/>
    <property type="evidence" value="ECO:0000318"/>
    <property type="project" value="GO_Central"/>
</dbReference>
<dbReference type="GO" id="GO:0019752">
    <property type="term" value="P:carboxylic acid metabolic process"/>
    <property type="evidence" value="ECO:0007669"/>
    <property type="project" value="InterPro"/>
</dbReference>
<dbReference type="GO" id="GO:0006099">
    <property type="term" value="P:tricarboxylic acid cycle"/>
    <property type="evidence" value="ECO:0007669"/>
    <property type="project" value="UniProtKB-KW"/>
</dbReference>
<dbReference type="CDD" id="cd01339">
    <property type="entry name" value="LDH-like_MDH"/>
    <property type="match status" value="1"/>
</dbReference>
<dbReference type="FunFam" id="3.40.50.720:FF:000018">
    <property type="entry name" value="Malate dehydrogenase"/>
    <property type="match status" value="1"/>
</dbReference>
<dbReference type="Gene3D" id="3.90.110.10">
    <property type="entry name" value="Lactate dehydrogenase/glycoside hydrolase, family 4, C-terminal"/>
    <property type="match status" value="1"/>
</dbReference>
<dbReference type="Gene3D" id="3.40.50.720">
    <property type="entry name" value="NAD(P)-binding Rossmann-like Domain"/>
    <property type="match status" value="1"/>
</dbReference>
<dbReference type="InterPro" id="IPR001557">
    <property type="entry name" value="L-lactate/malate_DH"/>
</dbReference>
<dbReference type="InterPro" id="IPR022383">
    <property type="entry name" value="Lactate/malate_DH_C"/>
</dbReference>
<dbReference type="InterPro" id="IPR001236">
    <property type="entry name" value="Lactate/malate_DH_N"/>
</dbReference>
<dbReference type="InterPro" id="IPR015955">
    <property type="entry name" value="Lactate_DH/Glyco_Ohase_4_C"/>
</dbReference>
<dbReference type="InterPro" id="IPR011275">
    <property type="entry name" value="Malate_DH_type3"/>
</dbReference>
<dbReference type="InterPro" id="IPR036291">
    <property type="entry name" value="NAD(P)-bd_dom_sf"/>
</dbReference>
<dbReference type="NCBIfam" id="NF004863">
    <property type="entry name" value="PRK06223.1"/>
    <property type="match status" value="1"/>
</dbReference>
<dbReference type="PANTHER" id="PTHR43128">
    <property type="entry name" value="L-2-HYDROXYCARBOXYLATE DEHYDROGENASE (NAD(P)(+))"/>
    <property type="match status" value="1"/>
</dbReference>
<dbReference type="PANTHER" id="PTHR43128:SF16">
    <property type="entry name" value="L-LACTATE DEHYDROGENASE"/>
    <property type="match status" value="1"/>
</dbReference>
<dbReference type="Pfam" id="PF02866">
    <property type="entry name" value="Ldh_1_C"/>
    <property type="match status" value="1"/>
</dbReference>
<dbReference type="Pfam" id="PF00056">
    <property type="entry name" value="Ldh_1_N"/>
    <property type="match status" value="1"/>
</dbReference>
<dbReference type="PIRSF" id="PIRSF000102">
    <property type="entry name" value="Lac_mal_DH"/>
    <property type="match status" value="1"/>
</dbReference>
<dbReference type="PRINTS" id="PR00086">
    <property type="entry name" value="LLDHDRGNASE"/>
</dbReference>
<dbReference type="SUPFAM" id="SSF56327">
    <property type="entry name" value="LDH C-terminal domain-like"/>
    <property type="match status" value="1"/>
</dbReference>
<dbReference type="SUPFAM" id="SSF51735">
    <property type="entry name" value="NAD(P)-binding Rossmann-fold domains"/>
    <property type="match status" value="1"/>
</dbReference>
<evidence type="ECO:0000250" key="1">
    <source>
        <dbReference type="UniProtKB" id="P61889"/>
    </source>
</evidence>
<evidence type="ECO:0000305" key="2"/>
<gene>
    <name evidence="1" type="primary">mdh2</name>
    <name type="ordered locus">aq_1665</name>
</gene>
<reference key="1">
    <citation type="journal article" date="1998" name="Nature">
        <title>The complete genome of the hyperthermophilic bacterium Aquifex aeolicus.</title>
        <authorList>
            <person name="Deckert G."/>
            <person name="Warren P.V."/>
            <person name="Gaasterland T."/>
            <person name="Young W.G."/>
            <person name="Lenox A.L."/>
            <person name="Graham D.E."/>
            <person name="Overbeek R."/>
            <person name="Snead M.A."/>
            <person name="Keller M."/>
            <person name="Aujay M."/>
            <person name="Huber R."/>
            <person name="Feldman R.A."/>
            <person name="Short J.M."/>
            <person name="Olsen G.J."/>
            <person name="Swanson R.V."/>
        </authorList>
    </citation>
    <scope>NUCLEOTIDE SEQUENCE [LARGE SCALE GENOMIC DNA]</scope>
    <source>
        <strain>VF5</strain>
    </source>
</reference>
<proteinExistence type="inferred from homology"/>
<feature type="chain" id="PRO_0000113423" description="Malate dehydrogenase 2">
    <location>
        <begin position="1"/>
        <end position="334"/>
    </location>
</feature>
<feature type="active site" description="Proton acceptor" evidence="1">
    <location>
        <position position="193"/>
    </location>
</feature>
<feature type="binding site" evidence="1">
    <location>
        <begin position="19"/>
        <end position="25"/>
    </location>
    <ligand>
        <name>NAD(+)</name>
        <dbReference type="ChEBI" id="CHEBI:57540"/>
    </ligand>
</feature>
<feature type="binding site" evidence="1">
    <location>
        <position position="100"/>
    </location>
    <ligand>
        <name>substrate</name>
    </ligand>
</feature>
<feature type="binding site" evidence="1">
    <location>
        <position position="106"/>
    </location>
    <ligand>
        <name>substrate</name>
    </ligand>
</feature>
<feature type="binding site" evidence="1">
    <location>
        <position position="113"/>
    </location>
    <ligand>
        <name>NAD(+)</name>
        <dbReference type="ChEBI" id="CHEBI:57540"/>
    </ligand>
</feature>
<feature type="binding site" evidence="1">
    <location>
        <begin position="136"/>
        <end position="138"/>
    </location>
    <ligand>
        <name>NAD(+)</name>
        <dbReference type="ChEBI" id="CHEBI:57540"/>
    </ligand>
</feature>
<feature type="binding site" evidence="1">
    <location>
        <position position="138"/>
    </location>
    <ligand>
        <name>substrate</name>
    </ligand>
</feature>
<feature type="binding site" evidence="1">
    <location>
        <position position="169"/>
    </location>
    <ligand>
        <name>substrate</name>
    </ligand>
</feature>
<comment type="function">
    <text evidence="1">Catalyzes the reversible oxidation of malate to oxaloacetate.</text>
</comment>
<comment type="catalytic activity">
    <reaction evidence="1">
        <text>(S)-malate + NAD(+) = oxaloacetate + NADH + H(+)</text>
        <dbReference type="Rhea" id="RHEA:21432"/>
        <dbReference type="ChEBI" id="CHEBI:15378"/>
        <dbReference type="ChEBI" id="CHEBI:15589"/>
        <dbReference type="ChEBI" id="CHEBI:16452"/>
        <dbReference type="ChEBI" id="CHEBI:57540"/>
        <dbReference type="ChEBI" id="CHEBI:57945"/>
        <dbReference type="EC" id="1.1.1.37"/>
    </reaction>
</comment>
<comment type="similarity">
    <text evidence="2">Belongs to the LDH/MDH superfamily.</text>
</comment>
<accession>O67581</accession>
<keyword id="KW-0520">NAD</keyword>
<keyword id="KW-0560">Oxidoreductase</keyword>
<keyword id="KW-1185">Reference proteome</keyword>
<keyword id="KW-0816">Tricarboxylic acid cycle</keyword>